<dbReference type="EMBL" id="CP001164">
    <property type="protein sequence ID" value="ACI39792.1"/>
    <property type="molecule type" value="Genomic_DNA"/>
</dbReference>
<dbReference type="RefSeq" id="WP_000853846.1">
    <property type="nucleotide sequence ID" value="NC_011353.1"/>
</dbReference>
<dbReference type="SMR" id="B5YV42"/>
<dbReference type="KEGG" id="ecf:ECH74115_3074"/>
<dbReference type="HOGENOM" id="CLU_053334_0_0_6"/>
<dbReference type="UniPathway" id="UPA00704">
    <property type="reaction ID" value="UER00716"/>
</dbReference>
<dbReference type="GO" id="GO:0005886">
    <property type="term" value="C:plasma membrane"/>
    <property type="evidence" value="ECO:0007669"/>
    <property type="project" value="TreeGrafter"/>
</dbReference>
<dbReference type="GO" id="GO:2001059">
    <property type="term" value="P:D-tagatose 6-phosphate catabolic process"/>
    <property type="evidence" value="ECO:0007669"/>
    <property type="project" value="UniProtKB-UniRule"/>
</dbReference>
<dbReference type="GO" id="GO:0019402">
    <property type="term" value="P:galactitol metabolic process"/>
    <property type="evidence" value="ECO:0007669"/>
    <property type="project" value="UniProtKB-KW"/>
</dbReference>
<dbReference type="GO" id="GO:0009401">
    <property type="term" value="P:phosphoenolpyruvate-dependent sugar phosphotransferase system"/>
    <property type="evidence" value="ECO:0007669"/>
    <property type="project" value="TreeGrafter"/>
</dbReference>
<dbReference type="FunFam" id="3.20.20.70:FF:000141">
    <property type="entry name" value="D-tagatose-1,6-bisphosphate aldolase subunit GatZ"/>
    <property type="match status" value="1"/>
</dbReference>
<dbReference type="Gene3D" id="3.20.20.70">
    <property type="entry name" value="Aldolase class I"/>
    <property type="match status" value="1"/>
</dbReference>
<dbReference type="Gene3D" id="1.10.400.20">
    <property type="entry name" value="putative tagatose 6-phosphate kinase domain like"/>
    <property type="match status" value="1"/>
</dbReference>
<dbReference type="HAMAP" id="MF_01296">
    <property type="entry name" value="Tagatose_aldol_GatZ"/>
    <property type="match status" value="1"/>
</dbReference>
<dbReference type="InterPro" id="IPR013785">
    <property type="entry name" value="Aldolase_TIM"/>
</dbReference>
<dbReference type="InterPro" id="IPR012062">
    <property type="entry name" value="GatZ/KbaZ-like"/>
</dbReference>
<dbReference type="InterPro" id="IPR050303">
    <property type="entry name" value="GatZ_KbaZ_carbometab"/>
</dbReference>
<dbReference type="InterPro" id="IPR023436">
    <property type="entry name" value="TagBP_ald_GatZ"/>
</dbReference>
<dbReference type="NCBIfam" id="TIGR02810">
    <property type="entry name" value="agaZ_gatZ"/>
    <property type="match status" value="1"/>
</dbReference>
<dbReference type="NCBIfam" id="NF011626">
    <property type="entry name" value="PRK15052.1"/>
    <property type="match status" value="1"/>
</dbReference>
<dbReference type="PANTHER" id="PTHR32502:SF12">
    <property type="entry name" value="D-TAGATOSE-1,6-BISPHOSPHATE ALDOLASE SUBUNIT GATZ"/>
    <property type="match status" value="1"/>
</dbReference>
<dbReference type="PANTHER" id="PTHR32502">
    <property type="entry name" value="N-ACETYLGALACTOSAMINE PERMEASE II COMPONENT-RELATED"/>
    <property type="match status" value="1"/>
</dbReference>
<dbReference type="Pfam" id="PF08013">
    <property type="entry name" value="GatZ_KbaZ-like"/>
    <property type="match status" value="1"/>
</dbReference>
<dbReference type="PIRSF" id="PIRSF009264">
    <property type="entry name" value="TagBP_ald_AgaZ"/>
    <property type="match status" value="1"/>
</dbReference>
<dbReference type="SUPFAM" id="SSF51569">
    <property type="entry name" value="Aldolase"/>
    <property type="match status" value="1"/>
</dbReference>
<comment type="function">
    <text evidence="1">Component of the tagatose-1,6-bisphosphate aldolase GatYZ that is required for full activity and stability of the Y subunit. Could have a chaperone-like function for the proper and stable folding of GatY. When expressed alone, GatZ does not show any aldolase activity. Is involved in the catabolism of galactitol.</text>
</comment>
<comment type="pathway">
    <text evidence="1">Carbohydrate metabolism; D-tagatose 6-phosphate degradation; D-glyceraldehyde 3-phosphate and glycerone phosphate from D-tagatose 6-phosphate: step 2/2.</text>
</comment>
<comment type="subunit">
    <text evidence="1">Forms a complex with GatY.</text>
</comment>
<comment type="similarity">
    <text evidence="1">Belongs to the GatZ/KbaZ family. GatZ subfamily.</text>
</comment>
<reference key="1">
    <citation type="journal article" date="2011" name="Proc. Natl. Acad. Sci. U.S.A.">
        <title>Genomic anatomy of Escherichia coli O157:H7 outbreaks.</title>
        <authorList>
            <person name="Eppinger M."/>
            <person name="Mammel M.K."/>
            <person name="Leclerc J.E."/>
            <person name="Ravel J."/>
            <person name="Cebula T.A."/>
        </authorList>
    </citation>
    <scope>NUCLEOTIDE SEQUENCE [LARGE SCALE GENOMIC DNA]</scope>
    <source>
        <strain>EC4115 / EHEC</strain>
    </source>
</reference>
<evidence type="ECO:0000255" key="1">
    <source>
        <dbReference type="HAMAP-Rule" id="MF_01296"/>
    </source>
</evidence>
<accession>B5YV42</accession>
<feature type="chain" id="PRO_0000372497" description="D-tagatose-1,6-bisphosphate aldolase subunit GatZ">
    <location>
        <begin position="1"/>
        <end position="420"/>
    </location>
</feature>
<protein>
    <recommendedName>
        <fullName evidence="1">D-tagatose-1,6-bisphosphate aldolase subunit GatZ</fullName>
    </recommendedName>
</protein>
<gene>
    <name evidence="1" type="primary">gatZ</name>
    <name type="ordered locus">ECH74115_3074</name>
</gene>
<sequence length="420" mass="47022">MKTLIARHKAGEHIGICSVCSAHPLVIEAALAFDRNSTRKVLIEATSNQVNQFGGYTGMTPADFREFVFAIADKVGFARERIILGGDHLGPNCWQQENVDAAMEKSVELVKAYVRAGFSKIHLDASMSCAGDPIPLAPETVAERAAVLCFAAESVATDCQREQLSYVIGTEVPVPGGEASAIQSVHITHVEDAANTLRTHQKAFIARGLTEALTRVIAIVVQPGVEFDHSNIIHYQPQEAQALAQWIENTRMVYEAHSTDYQTRTAYWELVRDHFAILKVGPALTFALREAIFALAQIEQELIAPENRSGCLAVIEEVMLDEPQYWKKYYRTGFNDSLLDIRYSLSDRIRYYWPHSRIKNSVETMMVNLQGVDIPLGMISQYLPKQFERIQSGELSAIPHQLIMDKIYDVLRAYRYGCAE</sequence>
<organism>
    <name type="scientific">Escherichia coli O157:H7 (strain EC4115 / EHEC)</name>
    <dbReference type="NCBI Taxonomy" id="444450"/>
    <lineage>
        <taxon>Bacteria</taxon>
        <taxon>Pseudomonadati</taxon>
        <taxon>Pseudomonadota</taxon>
        <taxon>Gammaproteobacteria</taxon>
        <taxon>Enterobacterales</taxon>
        <taxon>Enterobacteriaceae</taxon>
        <taxon>Escherichia</taxon>
    </lineage>
</organism>
<keyword id="KW-0298">Galactitol metabolism</keyword>
<proteinExistence type="inferred from homology"/>
<name>GATZ_ECO5E</name>